<protein>
    <recommendedName>
        <fullName evidence="1">Large ribosomal subunit protein uL30</fullName>
    </recommendedName>
    <alternativeName>
        <fullName evidence="2">50S ribosomal protein L30</fullName>
    </alternativeName>
</protein>
<gene>
    <name evidence="1" type="primary">rpmD</name>
    <name type="ordered locus">MS2030</name>
</gene>
<reference key="1">
    <citation type="journal article" date="2004" name="Nat. Biotechnol.">
        <title>The genome sequence of the capnophilic rumen bacterium Mannheimia succiniciproducens.</title>
        <authorList>
            <person name="Hong S.H."/>
            <person name="Kim J.S."/>
            <person name="Lee S.Y."/>
            <person name="In Y.H."/>
            <person name="Choi S.S."/>
            <person name="Rih J.-K."/>
            <person name="Kim C.H."/>
            <person name="Jeong H."/>
            <person name="Hur C.G."/>
            <person name="Kim J.J."/>
        </authorList>
    </citation>
    <scope>NUCLEOTIDE SEQUENCE [LARGE SCALE GENOMIC DNA]</scope>
    <source>
        <strain>KCTC 0769BP / MBEL55E</strain>
    </source>
</reference>
<dbReference type="EMBL" id="AE016827">
    <property type="protein sequence ID" value="AAU38637.1"/>
    <property type="status" value="ALT_INIT"/>
    <property type="molecule type" value="Genomic_DNA"/>
</dbReference>
<dbReference type="RefSeq" id="WP_005543631.1">
    <property type="nucleotide sequence ID" value="NC_006300.1"/>
</dbReference>
<dbReference type="SMR" id="Q65QX3"/>
<dbReference type="STRING" id="221988.MS2030"/>
<dbReference type="GeneID" id="93226855"/>
<dbReference type="KEGG" id="msu:MS2030"/>
<dbReference type="eggNOG" id="COG1841">
    <property type="taxonomic scope" value="Bacteria"/>
</dbReference>
<dbReference type="HOGENOM" id="CLU_131047_1_4_6"/>
<dbReference type="OrthoDB" id="9812790at2"/>
<dbReference type="Proteomes" id="UP000000607">
    <property type="component" value="Chromosome"/>
</dbReference>
<dbReference type="GO" id="GO:0022625">
    <property type="term" value="C:cytosolic large ribosomal subunit"/>
    <property type="evidence" value="ECO:0007669"/>
    <property type="project" value="TreeGrafter"/>
</dbReference>
<dbReference type="GO" id="GO:0003735">
    <property type="term" value="F:structural constituent of ribosome"/>
    <property type="evidence" value="ECO:0007669"/>
    <property type="project" value="InterPro"/>
</dbReference>
<dbReference type="GO" id="GO:0006412">
    <property type="term" value="P:translation"/>
    <property type="evidence" value="ECO:0007669"/>
    <property type="project" value="UniProtKB-UniRule"/>
</dbReference>
<dbReference type="CDD" id="cd01658">
    <property type="entry name" value="Ribosomal_L30"/>
    <property type="match status" value="1"/>
</dbReference>
<dbReference type="FunFam" id="3.30.1390.20:FF:000001">
    <property type="entry name" value="50S ribosomal protein L30"/>
    <property type="match status" value="1"/>
</dbReference>
<dbReference type="Gene3D" id="3.30.1390.20">
    <property type="entry name" value="Ribosomal protein L30, ferredoxin-like fold domain"/>
    <property type="match status" value="1"/>
</dbReference>
<dbReference type="HAMAP" id="MF_01371_B">
    <property type="entry name" value="Ribosomal_uL30_B"/>
    <property type="match status" value="1"/>
</dbReference>
<dbReference type="InterPro" id="IPR036919">
    <property type="entry name" value="Ribo_uL30_ferredoxin-like_sf"/>
</dbReference>
<dbReference type="InterPro" id="IPR005996">
    <property type="entry name" value="Ribosomal_uL30_bac-type"/>
</dbReference>
<dbReference type="InterPro" id="IPR018038">
    <property type="entry name" value="Ribosomal_uL30_CS"/>
</dbReference>
<dbReference type="InterPro" id="IPR016082">
    <property type="entry name" value="Ribosomal_uL30_ferredoxin-like"/>
</dbReference>
<dbReference type="NCBIfam" id="TIGR01308">
    <property type="entry name" value="rpmD_bact"/>
    <property type="match status" value="1"/>
</dbReference>
<dbReference type="PANTHER" id="PTHR15892:SF2">
    <property type="entry name" value="LARGE RIBOSOMAL SUBUNIT PROTEIN UL30M"/>
    <property type="match status" value="1"/>
</dbReference>
<dbReference type="PANTHER" id="PTHR15892">
    <property type="entry name" value="MITOCHONDRIAL RIBOSOMAL PROTEIN L30"/>
    <property type="match status" value="1"/>
</dbReference>
<dbReference type="Pfam" id="PF00327">
    <property type="entry name" value="Ribosomal_L30"/>
    <property type="match status" value="1"/>
</dbReference>
<dbReference type="PIRSF" id="PIRSF002211">
    <property type="entry name" value="Ribosomal_L30_bac-type"/>
    <property type="match status" value="1"/>
</dbReference>
<dbReference type="SUPFAM" id="SSF55129">
    <property type="entry name" value="Ribosomal protein L30p/L7e"/>
    <property type="match status" value="1"/>
</dbReference>
<dbReference type="PROSITE" id="PS00634">
    <property type="entry name" value="RIBOSOMAL_L30"/>
    <property type="match status" value="1"/>
</dbReference>
<evidence type="ECO:0000255" key="1">
    <source>
        <dbReference type="HAMAP-Rule" id="MF_01371"/>
    </source>
</evidence>
<evidence type="ECO:0000305" key="2"/>
<sequence length="59" mass="6678">MAKTIKVTQVRSSIARLPKHKATLRGLGLRHMHHTVELIDTPAVRGMINQVSYMVKVEE</sequence>
<accession>Q65QX3</accession>
<name>RL30_MANSM</name>
<comment type="subunit">
    <text evidence="1">Part of the 50S ribosomal subunit.</text>
</comment>
<comment type="similarity">
    <text evidence="1">Belongs to the universal ribosomal protein uL30 family.</text>
</comment>
<comment type="sequence caution" evidence="2">
    <conflict type="erroneous initiation">
        <sequence resource="EMBL-CDS" id="AAU38637"/>
    </conflict>
</comment>
<organism>
    <name type="scientific">Mannheimia succiniciproducens (strain KCTC 0769BP / MBEL55E)</name>
    <dbReference type="NCBI Taxonomy" id="221988"/>
    <lineage>
        <taxon>Bacteria</taxon>
        <taxon>Pseudomonadati</taxon>
        <taxon>Pseudomonadota</taxon>
        <taxon>Gammaproteobacteria</taxon>
        <taxon>Pasteurellales</taxon>
        <taxon>Pasteurellaceae</taxon>
        <taxon>Basfia</taxon>
    </lineage>
</organism>
<keyword id="KW-0687">Ribonucleoprotein</keyword>
<keyword id="KW-0689">Ribosomal protein</keyword>
<feature type="chain" id="PRO_0000273805" description="Large ribosomal subunit protein uL30">
    <location>
        <begin position="1"/>
        <end position="59"/>
    </location>
</feature>
<proteinExistence type="inferred from homology"/>